<gene>
    <name evidence="1" type="primary">rnfB</name>
    <name type="ordered locus">VIBHAR_02965</name>
</gene>
<keyword id="KW-0004">4Fe-4S</keyword>
<keyword id="KW-0997">Cell inner membrane</keyword>
<keyword id="KW-1003">Cell membrane</keyword>
<keyword id="KW-0249">Electron transport</keyword>
<keyword id="KW-0408">Iron</keyword>
<keyword id="KW-0411">Iron-sulfur</keyword>
<keyword id="KW-0472">Membrane</keyword>
<keyword id="KW-0479">Metal-binding</keyword>
<keyword id="KW-0677">Repeat</keyword>
<keyword id="KW-1278">Translocase</keyword>
<keyword id="KW-0813">Transport</keyword>
<feature type="chain" id="PRO_1000013665" description="Ion-translocating oxidoreductase complex subunit B">
    <location>
        <begin position="1"/>
        <end position="197"/>
    </location>
</feature>
<feature type="domain" description="4Fe-4S" evidence="1">
    <location>
        <begin position="32"/>
        <end position="90"/>
    </location>
</feature>
<feature type="domain" description="4Fe-4S ferredoxin-type 1" evidence="1">
    <location>
        <begin position="105"/>
        <end position="134"/>
    </location>
</feature>
<feature type="domain" description="4Fe-4S ferredoxin-type 2" evidence="1">
    <location>
        <begin position="135"/>
        <end position="164"/>
    </location>
</feature>
<feature type="region of interest" description="Hydrophobic" evidence="1">
    <location>
        <begin position="1"/>
        <end position="26"/>
    </location>
</feature>
<feature type="binding site" evidence="1">
    <location>
        <position position="49"/>
    </location>
    <ligand>
        <name>[4Fe-4S] cluster</name>
        <dbReference type="ChEBI" id="CHEBI:49883"/>
        <label>1</label>
    </ligand>
</feature>
<feature type="binding site" evidence="1">
    <location>
        <position position="52"/>
    </location>
    <ligand>
        <name>[4Fe-4S] cluster</name>
        <dbReference type="ChEBI" id="CHEBI:49883"/>
        <label>1</label>
    </ligand>
</feature>
<feature type="binding site" evidence="1">
    <location>
        <position position="57"/>
    </location>
    <ligand>
        <name>[4Fe-4S] cluster</name>
        <dbReference type="ChEBI" id="CHEBI:49883"/>
        <label>1</label>
    </ligand>
</feature>
<feature type="binding site" evidence="1">
    <location>
        <position position="73"/>
    </location>
    <ligand>
        <name>[4Fe-4S] cluster</name>
        <dbReference type="ChEBI" id="CHEBI:49883"/>
        <label>1</label>
    </ligand>
</feature>
<feature type="binding site" evidence="1">
    <location>
        <position position="114"/>
    </location>
    <ligand>
        <name>[4Fe-4S] cluster</name>
        <dbReference type="ChEBI" id="CHEBI:49883"/>
        <label>2</label>
    </ligand>
</feature>
<feature type="binding site" evidence="1">
    <location>
        <position position="117"/>
    </location>
    <ligand>
        <name>[4Fe-4S] cluster</name>
        <dbReference type="ChEBI" id="CHEBI:49883"/>
        <label>2</label>
    </ligand>
</feature>
<feature type="binding site" evidence="1">
    <location>
        <position position="120"/>
    </location>
    <ligand>
        <name>[4Fe-4S] cluster</name>
        <dbReference type="ChEBI" id="CHEBI:49883"/>
        <label>2</label>
    </ligand>
</feature>
<feature type="binding site" evidence="1">
    <location>
        <position position="124"/>
    </location>
    <ligand>
        <name>[4Fe-4S] cluster</name>
        <dbReference type="ChEBI" id="CHEBI:49883"/>
        <label>3</label>
    </ligand>
</feature>
<feature type="binding site" evidence="1">
    <location>
        <position position="144"/>
    </location>
    <ligand>
        <name>[4Fe-4S] cluster</name>
        <dbReference type="ChEBI" id="CHEBI:49883"/>
        <label>3</label>
    </ligand>
</feature>
<feature type="binding site" evidence="1">
    <location>
        <position position="147"/>
    </location>
    <ligand>
        <name>[4Fe-4S] cluster</name>
        <dbReference type="ChEBI" id="CHEBI:49883"/>
        <label>3</label>
    </ligand>
</feature>
<feature type="binding site" evidence="1">
    <location>
        <position position="150"/>
    </location>
    <ligand>
        <name>[4Fe-4S] cluster</name>
        <dbReference type="ChEBI" id="CHEBI:49883"/>
        <label>3</label>
    </ligand>
</feature>
<feature type="binding site" evidence="1">
    <location>
        <position position="154"/>
    </location>
    <ligand>
        <name>[4Fe-4S] cluster</name>
        <dbReference type="ChEBI" id="CHEBI:49883"/>
        <label>2</label>
    </ligand>
</feature>
<dbReference type="EC" id="7.-.-.-" evidence="1"/>
<dbReference type="EMBL" id="CP000789">
    <property type="protein sequence ID" value="ABU71916.1"/>
    <property type="molecule type" value="Genomic_DNA"/>
</dbReference>
<dbReference type="RefSeq" id="WP_012128497.1">
    <property type="nucleotide sequence ID" value="NC_009783.1"/>
</dbReference>
<dbReference type="SMR" id="A7MVC6"/>
<dbReference type="KEGG" id="vha:VIBHAR_02965"/>
<dbReference type="PATRIC" id="fig|338187.25.peg.3222"/>
<dbReference type="Proteomes" id="UP000008152">
    <property type="component" value="Chromosome I"/>
</dbReference>
<dbReference type="GO" id="GO:0005886">
    <property type="term" value="C:plasma membrane"/>
    <property type="evidence" value="ECO:0007669"/>
    <property type="project" value="UniProtKB-SubCell"/>
</dbReference>
<dbReference type="GO" id="GO:0051539">
    <property type="term" value="F:4 iron, 4 sulfur cluster binding"/>
    <property type="evidence" value="ECO:0007669"/>
    <property type="project" value="UniProtKB-UniRule"/>
</dbReference>
<dbReference type="GO" id="GO:0009055">
    <property type="term" value="F:electron transfer activity"/>
    <property type="evidence" value="ECO:0007669"/>
    <property type="project" value="InterPro"/>
</dbReference>
<dbReference type="GO" id="GO:0046872">
    <property type="term" value="F:metal ion binding"/>
    <property type="evidence" value="ECO:0007669"/>
    <property type="project" value="UniProtKB-KW"/>
</dbReference>
<dbReference type="GO" id="GO:0022900">
    <property type="term" value="P:electron transport chain"/>
    <property type="evidence" value="ECO:0007669"/>
    <property type="project" value="UniProtKB-UniRule"/>
</dbReference>
<dbReference type="FunFam" id="1.10.15.40:FF:000001">
    <property type="entry name" value="Ion-translocating oxidoreductase complex subunit B"/>
    <property type="match status" value="1"/>
</dbReference>
<dbReference type="Gene3D" id="3.30.70.20">
    <property type="match status" value="2"/>
</dbReference>
<dbReference type="Gene3D" id="1.10.15.40">
    <property type="entry name" value="Electron transport complex subunit B, putative Fe-S cluster"/>
    <property type="match status" value="1"/>
</dbReference>
<dbReference type="HAMAP" id="MF_00463">
    <property type="entry name" value="RsxB_RnfB"/>
    <property type="match status" value="1"/>
</dbReference>
<dbReference type="InterPro" id="IPR007202">
    <property type="entry name" value="4Fe-4S_dom"/>
</dbReference>
<dbReference type="InterPro" id="IPR017896">
    <property type="entry name" value="4Fe4S_Fe-S-bd"/>
</dbReference>
<dbReference type="InterPro" id="IPR017900">
    <property type="entry name" value="4Fe4S_Fe_S_CS"/>
</dbReference>
<dbReference type="InterPro" id="IPR050395">
    <property type="entry name" value="4Fe4S_Ferredoxin_RnfB"/>
</dbReference>
<dbReference type="InterPro" id="IPR010207">
    <property type="entry name" value="Elect_transpt_cplx_RnfB/RsxB"/>
</dbReference>
<dbReference type="InterPro" id="IPR016463">
    <property type="entry name" value="RnfB/RsxB_Proteobac"/>
</dbReference>
<dbReference type="NCBIfam" id="NF003475">
    <property type="entry name" value="PRK05113.1"/>
    <property type="match status" value="1"/>
</dbReference>
<dbReference type="NCBIfam" id="TIGR01944">
    <property type="entry name" value="rnfB"/>
    <property type="match status" value="1"/>
</dbReference>
<dbReference type="PANTHER" id="PTHR43560">
    <property type="entry name" value="ION-TRANSLOCATING OXIDOREDUCTASE COMPLEX SUBUNIT B"/>
    <property type="match status" value="1"/>
</dbReference>
<dbReference type="PANTHER" id="PTHR43560:SF1">
    <property type="entry name" value="ION-TRANSLOCATING OXIDOREDUCTASE COMPLEX SUBUNIT B"/>
    <property type="match status" value="1"/>
</dbReference>
<dbReference type="Pfam" id="PF14697">
    <property type="entry name" value="Fer4_21"/>
    <property type="match status" value="1"/>
</dbReference>
<dbReference type="Pfam" id="PF04060">
    <property type="entry name" value="FeS"/>
    <property type="match status" value="1"/>
</dbReference>
<dbReference type="PIRSF" id="PIRSF005784">
    <property type="entry name" value="Elect_transpt_RnfB"/>
    <property type="match status" value="1"/>
</dbReference>
<dbReference type="SUPFAM" id="SSF54862">
    <property type="entry name" value="4Fe-4S ferredoxins"/>
    <property type="match status" value="1"/>
</dbReference>
<dbReference type="PROSITE" id="PS51656">
    <property type="entry name" value="4FE4S"/>
    <property type="match status" value="1"/>
</dbReference>
<dbReference type="PROSITE" id="PS00198">
    <property type="entry name" value="4FE4S_FER_1"/>
    <property type="match status" value="2"/>
</dbReference>
<dbReference type="PROSITE" id="PS51379">
    <property type="entry name" value="4FE4S_FER_2"/>
    <property type="match status" value="2"/>
</dbReference>
<proteinExistence type="inferred from homology"/>
<protein>
    <recommendedName>
        <fullName evidence="1">Ion-translocating oxidoreductase complex subunit B</fullName>
        <ecNumber evidence="1">7.-.-.-</ecNumber>
    </recommendedName>
    <alternativeName>
        <fullName evidence="1">Rnf electron transport complex subunit B</fullName>
    </alternativeName>
</protein>
<name>RNFB_VIBC1</name>
<accession>A7MVC6</accession>
<sequence>MSTILIAIIALAALAAVFGAILGFASIRFKVEADPIVDQIDSILPQTQCGQCGYPGCRPYAEAIANGDQINKCPPGGQATIEKLADLMGVEAEESAHDLDSKVKTVAFIHEDMCIGCTKCIQACPVDAIVGGTKALHTVIKDECTGCDLCVAPCPTDCIEMIPVETTTESWKWKLNAIPVVNITDAANAANVTDSIK</sequence>
<evidence type="ECO:0000255" key="1">
    <source>
        <dbReference type="HAMAP-Rule" id="MF_00463"/>
    </source>
</evidence>
<reference key="1">
    <citation type="submission" date="2007-08" db="EMBL/GenBank/DDBJ databases">
        <authorList>
            <consortium name="The Vibrio harveyi Genome Sequencing Project"/>
            <person name="Bassler B."/>
            <person name="Clifton S.W."/>
            <person name="Fulton L."/>
            <person name="Delehaunty K."/>
            <person name="Fronick C."/>
            <person name="Harrison M."/>
            <person name="Markivic C."/>
            <person name="Fulton R."/>
            <person name="Tin-Wollam A.-M."/>
            <person name="Shah N."/>
            <person name="Pepin K."/>
            <person name="Nash W."/>
            <person name="Thiruvilangam P."/>
            <person name="Bhonagiri V."/>
            <person name="Waters C."/>
            <person name="Tu K.C."/>
            <person name="Irgon J."/>
            <person name="Wilson R.K."/>
        </authorList>
    </citation>
    <scope>NUCLEOTIDE SEQUENCE [LARGE SCALE GENOMIC DNA]</scope>
    <source>
        <strain>ATCC BAA-1116 / BB120</strain>
    </source>
</reference>
<comment type="function">
    <text evidence="1">Part of a membrane-bound complex that couples electron transfer with translocation of ions across the membrane.</text>
</comment>
<comment type="cofactor">
    <cofactor evidence="1">
        <name>[4Fe-4S] cluster</name>
        <dbReference type="ChEBI" id="CHEBI:49883"/>
    </cofactor>
    <text evidence="1">Binds 3 [4Fe-4S] clusters.</text>
</comment>
<comment type="subunit">
    <text evidence="1">The complex is composed of six subunits: RnfA, RnfB, RnfC, RnfD, RnfE and RnfG.</text>
</comment>
<comment type="subcellular location">
    <subcellularLocation>
        <location evidence="1">Cell inner membrane</location>
    </subcellularLocation>
</comment>
<comment type="similarity">
    <text evidence="1">Belongs to the 4Fe4S bacterial-type ferredoxin family. RnfB subfamily.</text>
</comment>
<organism>
    <name type="scientific">Vibrio campbellii (strain ATCC BAA-1116)</name>
    <dbReference type="NCBI Taxonomy" id="2902295"/>
    <lineage>
        <taxon>Bacteria</taxon>
        <taxon>Pseudomonadati</taxon>
        <taxon>Pseudomonadota</taxon>
        <taxon>Gammaproteobacteria</taxon>
        <taxon>Vibrionales</taxon>
        <taxon>Vibrionaceae</taxon>
        <taxon>Vibrio</taxon>
    </lineage>
</organism>